<accession>A0MZ67</accession>
<accession>A0MZ64</accession>
<organism>
    <name type="scientific">Rattus norvegicus</name>
    <name type="common">Rat</name>
    <dbReference type="NCBI Taxonomy" id="10116"/>
    <lineage>
        <taxon>Eukaryota</taxon>
        <taxon>Metazoa</taxon>
        <taxon>Chordata</taxon>
        <taxon>Craniata</taxon>
        <taxon>Vertebrata</taxon>
        <taxon>Euteleostomi</taxon>
        <taxon>Mammalia</taxon>
        <taxon>Eutheria</taxon>
        <taxon>Euarchontoglires</taxon>
        <taxon>Glires</taxon>
        <taxon>Rodentia</taxon>
        <taxon>Myomorpha</taxon>
        <taxon>Muroidea</taxon>
        <taxon>Muridae</taxon>
        <taxon>Murinae</taxon>
        <taxon>Rattus</taxon>
    </lineage>
</organism>
<dbReference type="EMBL" id="EF055485">
    <property type="protein sequence ID" value="ABK56020.1"/>
    <property type="molecule type" value="mRNA"/>
</dbReference>
<dbReference type="EMBL" id="EF055488">
    <property type="protein sequence ID" value="ABK56023.1"/>
    <property type="molecule type" value="mRNA"/>
</dbReference>
<dbReference type="RefSeq" id="NP_001073173.2">
    <molecule id="A0MZ67-1"/>
    <property type="nucleotide sequence ID" value="NM_001079705.4"/>
</dbReference>
<dbReference type="RefSeq" id="NP_001290466.1">
    <molecule id="A0MZ67-2"/>
    <property type="nucleotide sequence ID" value="NM_001303537.1"/>
</dbReference>
<dbReference type="SMR" id="A0MZ67"/>
<dbReference type="FunCoup" id="A0MZ67">
    <property type="interactions" value="281"/>
</dbReference>
<dbReference type="IntAct" id="A0MZ67">
    <property type="interactions" value="1"/>
</dbReference>
<dbReference type="STRING" id="10116.ENSRNOP00000061843"/>
<dbReference type="iPTMnet" id="A0MZ67"/>
<dbReference type="PhosphoSitePlus" id="A0MZ67"/>
<dbReference type="jPOST" id="A0MZ67"/>
<dbReference type="PaxDb" id="10116-ENSRNOP00000061843"/>
<dbReference type="PeptideAtlas" id="A0MZ67"/>
<dbReference type="Ensembl" id="ENSRNOT00000085778.2">
    <molecule id="A0MZ67-2"/>
    <property type="protein sequence ID" value="ENSRNOP00000074944.2"/>
    <property type="gene ID" value="ENSRNOG00000018350.8"/>
</dbReference>
<dbReference type="GeneID" id="292139"/>
<dbReference type="KEGG" id="rno:292139"/>
<dbReference type="AGR" id="RGD:1311558"/>
<dbReference type="CTD" id="57698"/>
<dbReference type="RGD" id="1311558">
    <property type="gene designation" value="Shtn1"/>
</dbReference>
<dbReference type="eggNOG" id="ENOG502QVVT">
    <property type="taxonomic scope" value="Eukaryota"/>
</dbReference>
<dbReference type="GeneTree" id="ENSGT00510000048167"/>
<dbReference type="InParanoid" id="A0MZ67"/>
<dbReference type="OrthoDB" id="78236at9989"/>
<dbReference type="PhylomeDB" id="A0MZ67"/>
<dbReference type="PRO" id="PR:A0MZ67"/>
<dbReference type="Proteomes" id="UP000002494">
    <property type="component" value="Chromosome 1"/>
</dbReference>
<dbReference type="GO" id="GO:0030424">
    <property type="term" value="C:axon"/>
    <property type="evidence" value="ECO:0000250"/>
    <property type="project" value="UniProtKB"/>
</dbReference>
<dbReference type="GO" id="GO:0044295">
    <property type="term" value="C:axonal growth cone"/>
    <property type="evidence" value="ECO:0000314"/>
    <property type="project" value="UniProtKB"/>
</dbReference>
<dbReference type="GO" id="GO:0031252">
    <property type="term" value="C:cell leading edge"/>
    <property type="evidence" value="ECO:0000250"/>
    <property type="project" value="UniProtKB"/>
</dbReference>
<dbReference type="GO" id="GO:0005737">
    <property type="term" value="C:cytoplasm"/>
    <property type="evidence" value="ECO:0000266"/>
    <property type="project" value="RGD"/>
</dbReference>
<dbReference type="GO" id="GO:0005829">
    <property type="term" value="C:cytosol"/>
    <property type="evidence" value="ECO:0000304"/>
    <property type="project" value="Reactome"/>
</dbReference>
<dbReference type="GO" id="GO:0030175">
    <property type="term" value="C:filopodium"/>
    <property type="evidence" value="ECO:0000314"/>
    <property type="project" value="UniProtKB"/>
</dbReference>
<dbReference type="GO" id="GO:0030426">
    <property type="term" value="C:growth cone"/>
    <property type="evidence" value="ECO:0000250"/>
    <property type="project" value="UniProtKB"/>
</dbReference>
<dbReference type="GO" id="GO:0030027">
    <property type="term" value="C:lamellipodium"/>
    <property type="evidence" value="ECO:0000314"/>
    <property type="project" value="UniProtKB"/>
</dbReference>
<dbReference type="GO" id="GO:0005874">
    <property type="term" value="C:microtubule"/>
    <property type="evidence" value="ECO:0000266"/>
    <property type="project" value="RGD"/>
</dbReference>
<dbReference type="GO" id="GO:0005875">
    <property type="term" value="C:microtubule associated complex"/>
    <property type="evidence" value="ECO:0000250"/>
    <property type="project" value="UniProtKB"/>
</dbReference>
<dbReference type="GO" id="GO:0015630">
    <property type="term" value="C:microtubule cytoskeleton"/>
    <property type="evidence" value="ECO:0000250"/>
    <property type="project" value="UniProtKB"/>
</dbReference>
<dbReference type="GO" id="GO:0043204">
    <property type="term" value="C:perikaryon"/>
    <property type="evidence" value="ECO:0000250"/>
    <property type="project" value="UniProtKB"/>
</dbReference>
<dbReference type="GO" id="GO:0048471">
    <property type="term" value="C:perinuclear region of cytoplasm"/>
    <property type="evidence" value="ECO:0000250"/>
    <property type="project" value="UniProtKB"/>
</dbReference>
<dbReference type="GO" id="GO:0051015">
    <property type="term" value="F:actin filament binding"/>
    <property type="evidence" value="ECO:0000314"/>
    <property type="project" value="UniProtKB"/>
</dbReference>
<dbReference type="GO" id="GO:0050839">
    <property type="term" value="F:cell adhesion molecule binding"/>
    <property type="evidence" value="ECO:0000353"/>
    <property type="project" value="UniProtKB"/>
</dbReference>
<dbReference type="GO" id="GO:0019894">
    <property type="term" value="F:kinesin binding"/>
    <property type="evidence" value="ECO:0000266"/>
    <property type="project" value="RGD"/>
</dbReference>
<dbReference type="GO" id="GO:0061573">
    <property type="term" value="P:actin filament bundle retrograde transport"/>
    <property type="evidence" value="ECO:0000315"/>
    <property type="project" value="UniProtKB"/>
</dbReference>
<dbReference type="GO" id="GO:0007409">
    <property type="term" value="P:axonogenesis"/>
    <property type="evidence" value="ECO:0000314"/>
    <property type="project" value="MGI"/>
</dbReference>
<dbReference type="GO" id="GO:0032488">
    <property type="term" value="P:Cdc42 protein signal transduction"/>
    <property type="evidence" value="ECO:0000314"/>
    <property type="project" value="UniProtKB"/>
</dbReference>
<dbReference type="GO" id="GO:0060327">
    <property type="term" value="P:cytoplasmic actin-based contraction involved in cell motility"/>
    <property type="evidence" value="ECO:0000314"/>
    <property type="project" value="UniProtKB"/>
</dbReference>
<dbReference type="GO" id="GO:0061163">
    <property type="term" value="P:endoplasmic reticulum polarization"/>
    <property type="evidence" value="ECO:0000250"/>
    <property type="project" value="UniProtKB"/>
</dbReference>
<dbReference type="GO" id="GO:0038007">
    <property type="term" value="P:netrin-activated signaling pathway"/>
    <property type="evidence" value="ECO:0000314"/>
    <property type="project" value="UniProtKB"/>
</dbReference>
<dbReference type="GO" id="GO:0048812">
    <property type="term" value="P:neuron projection morphogenesis"/>
    <property type="evidence" value="ECO:0000266"/>
    <property type="project" value="RGD"/>
</dbReference>
<dbReference type="GO" id="GO:0045773">
    <property type="term" value="P:positive regulation of axon extension"/>
    <property type="evidence" value="ECO:0000314"/>
    <property type="project" value="UniProtKB"/>
</dbReference>
<dbReference type="GO" id="GO:2001224">
    <property type="term" value="P:positive regulation of neuron migration"/>
    <property type="evidence" value="ECO:0000250"/>
    <property type="project" value="UniProtKB"/>
</dbReference>
<dbReference type="GO" id="GO:0007265">
    <property type="term" value="P:Ras protein signal transduction"/>
    <property type="evidence" value="ECO:0000314"/>
    <property type="project" value="UniProtKB"/>
</dbReference>
<dbReference type="GO" id="GO:2000114">
    <property type="term" value="P:regulation of establishment of cell polarity"/>
    <property type="evidence" value="ECO:0000250"/>
    <property type="project" value="UniProtKB"/>
</dbReference>
<dbReference type="GO" id="GO:2001222">
    <property type="term" value="P:regulation of neuron migration"/>
    <property type="evidence" value="ECO:0000266"/>
    <property type="project" value="RGD"/>
</dbReference>
<dbReference type="GO" id="GO:0006930">
    <property type="term" value="P:substrate-dependent cell migration, cell extension"/>
    <property type="evidence" value="ECO:0000314"/>
    <property type="project" value="UniProtKB"/>
</dbReference>
<dbReference type="InterPro" id="IPR024849">
    <property type="entry name" value="Shootin-1"/>
</dbReference>
<dbReference type="PANTHER" id="PTHR46606">
    <property type="entry name" value="SHOOTIN-1"/>
    <property type="match status" value="1"/>
</dbReference>
<dbReference type="PANTHER" id="PTHR46606:SF3">
    <property type="entry name" value="SHOOTIN-1"/>
    <property type="match status" value="1"/>
</dbReference>
<keyword id="KW-0007">Acetylation</keyword>
<keyword id="KW-0025">Alternative splicing</keyword>
<keyword id="KW-0966">Cell projection</keyword>
<keyword id="KW-0175">Coiled coil</keyword>
<keyword id="KW-0963">Cytoplasm</keyword>
<keyword id="KW-0206">Cytoskeleton</keyword>
<keyword id="KW-0217">Developmental protein</keyword>
<keyword id="KW-0597">Phosphoprotein</keyword>
<keyword id="KW-1185">Reference proteome</keyword>
<protein>
    <recommendedName>
        <fullName evidence="13">Shootin-1</fullName>
    </recommendedName>
    <alternativeName>
        <fullName evidence="11">Shootin1</fullName>
    </alternativeName>
</protein>
<name>SHOT1_RAT</name>
<reference key="1">
    <citation type="journal article" date="2006" name="J. Cell Biol.">
        <title>Shootin1: a protein involved in the organization of an asymmetric signal for neuronal polarization.</title>
        <authorList>
            <person name="Toriyama M."/>
            <person name="Shimada T."/>
            <person name="Kim K.B."/>
            <person name="Mitsuba M."/>
            <person name="Nomura E."/>
            <person name="Katsuta K."/>
            <person name="Sakumura Y."/>
            <person name="Roepstorff P."/>
            <person name="Inagaki N."/>
        </authorList>
    </citation>
    <scope>NUCLEOTIDE SEQUENCE [MRNA] (ISOFORM 2)</scope>
    <scope>IDENTIFICATION BY MASS SPECTROMETRY</scope>
    <scope>FUNCTION</scope>
    <scope>SUBCELLULAR LOCATION</scope>
    <scope>INTERACTION WITH RUFY3</scope>
    <scope>TISSUE SPECIFICITY</scope>
    <scope>DEVELOPMENTAL STAGE</scope>
    <source>
        <strain>Sprague-Dawley</strain>
    </source>
</reference>
<reference key="2">
    <citation type="submission" date="2006-10" db="EMBL/GenBank/DDBJ databases">
        <title>Shootin2: a splicing variant of shootin1.</title>
        <authorList>
            <person name="Katsuta K."/>
            <person name="Toriyama M."/>
            <person name="Shimada T."/>
            <person name="Inagaki N."/>
        </authorList>
    </citation>
    <scope>NUCLEOTIDE SEQUENCE [MRNA] (ISOFORM 1)</scope>
    <source>
        <strain>Wistar</strain>
    </source>
</reference>
<reference key="3">
    <citation type="journal article" date="2007" name="J. Biol. Chem.">
        <title>Singar1, a novel RUN domain-containing protein, suppresses formation of surplus axons for neuronal polarity.</title>
        <authorList>
            <person name="Mori T."/>
            <person name="Wada T."/>
            <person name="Suzuki T."/>
            <person name="Kubota Y."/>
            <person name="Inagaki N."/>
        </authorList>
    </citation>
    <scope>FUNCTION</scope>
</reference>
<reference key="4">
    <citation type="journal article" date="2008" name="J. Cell Biol.">
        <title>Shootin1 interacts with actin retrograde flow and L1-CAM to promote axon outgrowth.</title>
        <authorList>
            <person name="Shimada T."/>
            <person name="Toriyama M."/>
            <person name="Uemura K."/>
            <person name="Kamiguchi H."/>
            <person name="Sugiura T."/>
            <person name="Watanabe N."/>
            <person name="Inagaki N."/>
        </authorList>
    </citation>
    <scope>FUNCTION</scope>
    <scope>INTERACTION WITH L1CAM</scope>
    <scope>INTERACTION WITH F-ACTIN</scope>
    <scope>DOMAIN</scope>
    <scope>SUBCELLULAR LOCATION</scope>
    <scope>TISSUE SPECIFICITY</scope>
</reference>
<reference key="5">
    <citation type="journal article" date="2010" name="Mol. Syst. Biol.">
        <title>A diffusion-based neurite length-sensing mechanism involved in neuronal symmetry breaking.</title>
        <authorList>
            <person name="Toriyama M."/>
            <person name="Sakumura Y."/>
            <person name="Shimada T."/>
            <person name="Ishii S."/>
            <person name="Inagaki N."/>
        </authorList>
    </citation>
    <scope>FUNCTION</scope>
    <scope>SUBCELLULAR LOCATION</scope>
    <scope>INDUCTION</scope>
</reference>
<reference key="6">
    <citation type="journal article" date="2012" name="Nat. Commun.">
        <title>Quantitative maps of protein phosphorylation sites across 14 different rat organs and tissues.</title>
        <authorList>
            <person name="Lundby A."/>
            <person name="Secher A."/>
            <person name="Lage K."/>
            <person name="Nordsborg N.B."/>
            <person name="Dmytriyev A."/>
            <person name="Lundby C."/>
            <person name="Olsen J.V."/>
        </authorList>
    </citation>
    <scope>PHOSPHORYLATION [LARGE SCALE ANALYSIS] AT SER-506</scope>
    <scope>IDENTIFICATION BY MASS SPECTROMETRY [LARGE SCALE ANALYSIS]</scope>
</reference>
<reference key="7">
    <citation type="journal article" date="2013" name="Curr. Biol.">
        <title>Conversion of a signal into forces for axon outgrowth through Pak1-mediated shootin1 phosphorylation.</title>
        <authorList>
            <person name="Toriyama M."/>
            <person name="Kozawa S."/>
            <person name="Sakumura Y."/>
            <person name="Inagaki N."/>
        </authorList>
    </citation>
    <scope>FUNCTION</scope>
    <scope>INTERACTION WITH F-ACTIN</scope>
    <scope>PHOSPHORYLATION AT SER-101 AND SER-249</scope>
    <scope>SUBCELLULAR LOCATION</scope>
    <scope>MUTAGENESIS OF SER-101 AND SER-249</scope>
</reference>
<reference key="8">
    <citation type="journal article" date="2013" name="PLoS ONE">
        <title>Synchronous symmetry breaking in neurons with different neurite counts.</title>
        <authorList>
            <person name="Wissner-Gross Z.D."/>
            <person name="Scott M.A."/>
            <person name="Steinmeyer J.D."/>
            <person name="Yanik M.F."/>
        </authorList>
    </citation>
    <scope>DEVELOPMENTAL STAGE</scope>
</reference>
<proteinExistence type="evidence at protein level"/>
<sequence length="633" mass="71446">MNSSDEEKQLQLITSLKEQAIGEYEDLRAENQKTKETCDKIRQERDEAVKKLEEFQKISHMVIEEVNFMQNHLEIEKTCRESAEALATKLNKENKTLKRISMLYMAKLGPDVITEEINIDDDDPGTDTDAAAETCVSVQCQKQIKELRDQIVSVQEEKKVLAIELESLKSKLGEVMEEVNKVKQEKAVLNSEVLEQRKVLEKCNRVSVLAVEEYEELQVNLELEKDLRKKAESFAQEMFIEQNKLKRQSHLLLQSSLPDQQLLKALDENAKLIQQLEEERIQHQQKVKELEERLENEALHKEIHNLRQQLELLEDDKRELEQKYQSSEEKARNLKHSVDELQKRVNQSENSVPPPPPPPPPLPPPPPNPIRSLMSMIRKRSHPSGGSTKKEKATQPETAEEVTDLKRQAVEEMMDRIKKGVHLRPVNQTARPKAKPDSLKGSESAVDELKGILGTLNKSTSSRSLKSLGPENSETELERILRRRKLTAEADSSSPTGILATSESKSMPVLGSVSSVTKSALNKKTLEAEFNNPCPLTPEPGEGPRKLEGCTNSKVTFQPPSKGGYRRKCVGSENQSEPVVVLDPVSTHEPQTKDQAAEKDPTQCKEEERGETQPEFKEDSSGGKTGETDSSNC</sequence>
<gene>
    <name evidence="13" type="primary">Shtn1</name>
</gene>
<evidence type="ECO:0000250" key="1">
    <source>
        <dbReference type="UniProtKB" id="A0MZ66"/>
    </source>
</evidence>
<evidence type="ECO:0000250" key="2">
    <source>
        <dbReference type="UniProtKB" id="Q8K2Q9"/>
    </source>
</evidence>
<evidence type="ECO:0000255" key="3"/>
<evidence type="ECO:0000256" key="4">
    <source>
        <dbReference type="SAM" id="MobiDB-lite"/>
    </source>
</evidence>
<evidence type="ECO:0000269" key="5">
    <source>
    </source>
</evidence>
<evidence type="ECO:0000269" key="6">
    <source>
    </source>
</evidence>
<evidence type="ECO:0000269" key="7">
    <source>
    </source>
</evidence>
<evidence type="ECO:0000269" key="8">
    <source>
    </source>
</evidence>
<evidence type="ECO:0000269" key="9">
    <source>
    </source>
</evidence>
<evidence type="ECO:0000269" key="10">
    <source>
    </source>
</evidence>
<evidence type="ECO:0000303" key="11">
    <source>
    </source>
</evidence>
<evidence type="ECO:0000305" key="12"/>
<evidence type="ECO:0000312" key="13">
    <source>
        <dbReference type="RGD" id="1311558"/>
    </source>
</evidence>
<evidence type="ECO:0007744" key="14">
    <source>
    </source>
</evidence>
<comment type="function">
    <text evidence="2 5 6 7 8 10">Involved in the generation of internal asymmetric signals required for neuronal polarization and neurite outgrowth (PubMed:17030985, PubMed:17439943, PubMed:18519736, PubMed:20664640). Mediates netrin-1-induced F-actin-substrate coupling or 'clutch engagement' within the axon growth cone through activation of CDC42, RAC1 and PAK1-dependent signaling pathway, thereby converting the F-actin retrograde flow into traction forces, concomitantly with filopodium extension and axon outgrowth (PubMed:18519736, PubMed:23453953). Plays a role in cytoskeletal organization by regulating the subcellular localization of phosphoinositide 3-kinase (PI3K) activity at the axonal growth cone (PubMed:17030985). Also plays a role in regenerative neurite outgrowth (PubMed:20664640). In the developing cortex, cooperates with KIF20B to promote both the transition from the multipolar to the bipolar stage and the radial migration of cortical neurons from the ventricular zone toward the superficial layer of the neocortex. Involved in the accumulation of phosphatidylinositol 3,4,5-trisphosphate (PIP3) in the growth cone of primary hippocampal neurons (By similarity).</text>
</comment>
<comment type="subunit">
    <text evidence="2 5 7 10">Interacts with PFN2. Interacts (via N-terminus) with KIF20B; this interaction is direct and promotes the association of SHTN1 to microtubules in primary neurons. Associates with microtubule (By similarity). Interacts with L1CAM; this interaction occurs in axonal growth cones (PubMed:18519736). Interacts with actin filament retrograde flow; this interaction is enhanced in a netrin-1- and PAK1-dependent manner and promotes F-actin-substrate coupling and concomitant formation of traction forces at axonal growth cones (PubMed:18519736, PubMed:23453953). Interacts with RUFY3 (PubMed:17030985).</text>
</comment>
<comment type="interaction">
    <interactant intactId="EBI-1392040">
        <id>A0MZ67</id>
    </interactant>
    <interactant intactId="EBI-518443">
        <id>Q63787</id>
        <label>Pik3r1</label>
    </interactant>
    <organismsDiffer>false</organismsDiffer>
    <experiments>2</experiments>
</comment>
<comment type="subcellular location">
    <subcellularLocation>
        <location evidence="5 8">Perikaryon</location>
    </subcellularLocation>
    <subcellularLocation>
        <location evidence="5 8">Cell projection</location>
        <location evidence="5 8">Axon</location>
    </subcellularLocation>
    <subcellularLocation>
        <location evidence="5 7 8 10">Cell projection</location>
        <location evidence="5 7 8 10">Growth cone</location>
    </subcellularLocation>
    <subcellularLocation>
        <location evidence="2">Cytoplasm</location>
        <location evidence="2">Cytoskeleton</location>
    </subcellularLocation>
    <subcellularLocation>
        <location evidence="7 10">Cell projection</location>
        <location evidence="7 10">Filopodium</location>
    </subcellularLocation>
    <subcellularLocation>
        <location evidence="7 10">Cell projection</location>
        <location evidence="7 10">Lamellipodium</location>
    </subcellularLocation>
    <text evidence="2 5 7 10">Localizes in multiple growth cones at neurite tips before the neuronal symmetry-breaking step (PubMed:23453953). Accumulates in growth cones of a single nascent axon in a neurite length-dependent manner during the neuronal symmetry-breaking step; when absent from the nascent axon's siblings, probably due to competitive transport, prevents the formation of surplus axons (PubMed:17030985, PubMed:23453953). Transported anterogradely from the soma to the axon growth cone in an actin and myosin-dependent manner and passively diffuses back to the cell bodies (PubMed:23453953). Colocalized with L1CAM in close apposition with actin filaments in filopodia and lamellipodia of axonal growth cones in hippocampal neurons (PubMed:18519736). Exhibits retrograde movements in filopodia and lamellopodia of axonal growth cones (PubMed:18519736). Colocalized with KIF20B along microtubules to the tip of the growing cone in primary hippocampal neurons. Recruited to the growth cone of developing axon in a KIF20B- and microtubule-dependent manner (By similarity).</text>
</comment>
<comment type="alternative products">
    <event type="alternative splicing"/>
    <isoform>
        <id>A0MZ67-1</id>
        <name>1</name>
        <name>Shootin2</name>
        <sequence type="displayed"/>
    </isoform>
    <isoform>
        <id>A0MZ67-2</id>
        <name>2</name>
        <sequence type="described" ref="VSP_027056 VSP_027057"/>
    </isoform>
</comment>
<comment type="tissue specificity">
    <text evidence="5 7">Brain-specific (at protein level) (PubMed:17030985). Expressed in hippocampal neurons (PubMed:18519736).</text>
</comment>
<comment type="developmental stage">
    <text evidence="5 9">Expressed in hippocampal neurons at 18 dpc (PubMed:23408951). Expressed at high level both in hippocampal neurons and in brain, during the period of axon formation and elongation. Accumulates in axonal growth cones during the stage 2/3 transition. Accumulates asymmetrically in a single neurite before polarization, while it is depleted in its sibling neurites, through competitive transport to multiple neurites. Transported anterogradely to the growth cones and diffused back to the soma (at protein level) (PubMed:17030985).</text>
</comment>
<comment type="induction">
    <text evidence="8">Up-regulated by axonal regeneration (PubMed:20664640).</text>
</comment>
<comment type="domain">
    <text evidence="7">The N-terminus region is necessary for interaction with actin retrograde filament flow and accumulation in neuronal growth cones (PubMed:18519736).</text>
</comment>
<comment type="PTM">
    <text evidence="10">Phosphorylated on Ser-101 and Ser-249 by PAK1 through a CDC42- and RAC1-dependent signaling pathway, which enhances its association with F-actin retrograde flow in filopodia and lamellipodia of axonal growth cones (PubMed:23453953). Phosphorylation on Ser-101 and Ser-249 is increased by netrin-1 (PubMed:23453953).</text>
</comment>
<comment type="similarity">
    <text evidence="12">Belongs to the shootin family.</text>
</comment>
<feature type="chain" id="PRO_0000295743" description="Shootin-1">
    <location>
        <begin position="1"/>
        <end position="633"/>
    </location>
</feature>
<feature type="region of interest" description="Disordered" evidence="4">
    <location>
        <begin position="343"/>
        <end position="508"/>
    </location>
</feature>
<feature type="region of interest" description="Disordered" evidence="4">
    <location>
        <begin position="525"/>
        <end position="633"/>
    </location>
</feature>
<feature type="coiled-coil region" evidence="3">
    <location>
        <begin position="7"/>
        <end position="353"/>
    </location>
</feature>
<feature type="compositionally biased region" description="Pro residues" evidence="4">
    <location>
        <begin position="352"/>
        <end position="369"/>
    </location>
</feature>
<feature type="compositionally biased region" description="Basic and acidic residues" evidence="4">
    <location>
        <begin position="403"/>
        <end position="418"/>
    </location>
</feature>
<feature type="compositionally biased region" description="Polar residues" evidence="4">
    <location>
        <begin position="456"/>
        <end position="465"/>
    </location>
</feature>
<feature type="compositionally biased region" description="Polar residues" evidence="4">
    <location>
        <begin position="490"/>
        <end position="505"/>
    </location>
</feature>
<feature type="compositionally biased region" description="Polar residues" evidence="4">
    <location>
        <begin position="550"/>
        <end position="559"/>
    </location>
</feature>
<feature type="compositionally biased region" description="Basic and acidic residues" evidence="4">
    <location>
        <begin position="590"/>
        <end position="621"/>
    </location>
</feature>
<feature type="modified residue" description="N-acetylmethionine" evidence="2">
    <location>
        <position position="1"/>
    </location>
</feature>
<feature type="modified residue" description="Phosphoserine" evidence="2">
    <location>
        <position position="3"/>
    </location>
</feature>
<feature type="modified residue" description="Phosphoserine" evidence="1">
    <location>
        <position position="4"/>
    </location>
</feature>
<feature type="modified residue" description="Phosphoserine; by PAK1" evidence="10">
    <location>
        <position position="101"/>
    </location>
</feature>
<feature type="modified residue" description="Phosphoserine; by PAK1" evidence="10">
    <location>
        <position position="249"/>
    </location>
</feature>
<feature type="modified residue" description="Phosphoserine" evidence="1">
    <location>
        <position position="375"/>
    </location>
</feature>
<feature type="modified residue" description="Phosphoserine" evidence="1">
    <location>
        <position position="473"/>
    </location>
</feature>
<feature type="modified residue" description="Phosphothreonine" evidence="1">
    <location>
        <position position="487"/>
    </location>
</feature>
<feature type="modified residue" description="Phosphoserine" evidence="1">
    <location>
        <position position="494"/>
    </location>
</feature>
<feature type="modified residue" description="Phosphothreonine" evidence="1">
    <location>
        <position position="496"/>
    </location>
</feature>
<feature type="modified residue" description="Phosphoserine" evidence="14">
    <location>
        <position position="506"/>
    </location>
</feature>
<feature type="modified residue" description="Phosphoserine" evidence="1">
    <location>
        <position position="515"/>
    </location>
</feature>
<feature type="modified residue" description="Phosphothreonine" evidence="1">
    <location>
        <position position="537"/>
    </location>
</feature>
<feature type="splice variant" id="VSP_027056" description="In isoform 2." evidence="11">
    <original>GTL</original>
    <variation>ASQ</variation>
    <location>
        <begin position="454"/>
        <end position="456"/>
    </location>
</feature>
<feature type="splice variant" id="VSP_027057" description="In isoform 2." evidence="11">
    <location>
        <begin position="457"/>
        <end position="633"/>
    </location>
</feature>
<feature type="mutagenesis site" description="Inhibits F-actin retrograde flow at the peripheral region of growth cones; when associated with A-249." evidence="10">
    <original>S</original>
    <variation>A</variation>
    <location>
        <position position="101"/>
    </location>
</feature>
<feature type="mutagenesis site" description="Does not inhibit F-actin retrograde flow at the peripheral region of growth cones; when associated with D-249." evidence="10">
    <original>S</original>
    <variation>D</variation>
    <location>
        <position position="101"/>
    </location>
</feature>
<feature type="mutagenesis site" description="Inhibits F-actin retrograde flow at the peripheral region of growth cones; when associated with A-101." evidence="10">
    <original>S</original>
    <variation>A</variation>
    <location>
        <position position="249"/>
    </location>
</feature>
<feature type="mutagenesis site" description="Does not inhibit F-actin retrograde flow at the peripheral region of growth cones; when associated with D-101." evidence="10">
    <original>S</original>
    <variation>D</variation>
    <location>
        <position position="249"/>
    </location>
</feature>